<proteinExistence type="evidence at protein level"/>
<evidence type="ECO:0000250" key="1"/>
<evidence type="ECO:0000255" key="2"/>
<evidence type="ECO:0000255" key="3">
    <source>
        <dbReference type="PROSITE-ProRule" id="PRU00250"/>
    </source>
</evidence>
<evidence type="ECO:0000256" key="4">
    <source>
        <dbReference type="SAM" id="MobiDB-lite"/>
    </source>
</evidence>
<evidence type="ECO:0000305" key="5"/>
<organism>
    <name type="scientific">Mus musculus</name>
    <name type="common">Mouse</name>
    <dbReference type="NCBI Taxonomy" id="10090"/>
    <lineage>
        <taxon>Eukaryota</taxon>
        <taxon>Metazoa</taxon>
        <taxon>Chordata</taxon>
        <taxon>Craniata</taxon>
        <taxon>Vertebrata</taxon>
        <taxon>Euteleostomi</taxon>
        <taxon>Mammalia</taxon>
        <taxon>Eutheria</taxon>
        <taxon>Euarchontoglires</taxon>
        <taxon>Glires</taxon>
        <taxon>Rodentia</taxon>
        <taxon>Myomorpha</taxon>
        <taxon>Muroidea</taxon>
        <taxon>Muridae</taxon>
        <taxon>Murinae</taxon>
        <taxon>Mus</taxon>
        <taxon>Mus</taxon>
    </lineage>
</organism>
<comment type="function">
    <text evidence="1">Probably involved in maintaining Golgi structure.</text>
</comment>
<comment type="subcellular location">
    <subcellularLocation>
        <location>Cytoplasm</location>
    </subcellularLocation>
    <subcellularLocation>
        <location evidence="1">Golgi apparatus membrane</location>
        <topology evidence="1">Peripheral membrane protein</topology>
    </subcellularLocation>
</comment>
<comment type="domain">
    <text>Extended rod-like protein with coiled-coil domains.</text>
</comment>
<feature type="chain" id="PRO_0000190073" description="GRIP and coiled-coil domain-containing protein 1">
    <location>
        <begin position="1"/>
        <end position="778"/>
    </location>
</feature>
<feature type="domain" description="GRIP" evidence="3">
    <location>
        <begin position="716"/>
        <end position="766"/>
    </location>
</feature>
<feature type="region of interest" description="Disordered" evidence="4">
    <location>
        <begin position="70"/>
        <end position="157"/>
    </location>
</feature>
<feature type="region of interest" description="Disordered" evidence="4">
    <location>
        <begin position="186"/>
        <end position="208"/>
    </location>
</feature>
<feature type="region of interest" description="Disordered" evidence="4">
    <location>
        <begin position="617"/>
        <end position="638"/>
    </location>
</feature>
<feature type="coiled-coil region" evidence="2">
    <location>
        <begin position="13"/>
        <end position="61"/>
    </location>
</feature>
<feature type="coiled-coil region" evidence="2">
    <location>
        <begin position="152"/>
        <end position="702"/>
    </location>
</feature>
<feature type="compositionally biased region" description="Basic and acidic residues" evidence="4">
    <location>
        <begin position="83"/>
        <end position="93"/>
    </location>
</feature>
<feature type="compositionally biased region" description="Low complexity" evidence="4">
    <location>
        <begin position="94"/>
        <end position="109"/>
    </location>
</feature>
<feature type="compositionally biased region" description="Low complexity" evidence="4">
    <location>
        <begin position="133"/>
        <end position="152"/>
    </location>
</feature>
<feature type="sequence conflict" description="In Ref. 1; BAC27780." evidence="5" ref="1">
    <original>V</original>
    <variation>M</variation>
    <location>
        <position position="456"/>
    </location>
</feature>
<accession>Q9D4H2</accession>
<accession>Q8CCR3</accession>
<keyword id="KW-0175">Coiled coil</keyword>
<keyword id="KW-0963">Cytoplasm</keyword>
<keyword id="KW-0903">Direct protein sequencing</keyword>
<keyword id="KW-0333">Golgi apparatus</keyword>
<keyword id="KW-0472">Membrane</keyword>
<keyword id="KW-1185">Reference proteome</keyword>
<name>GCC1_MOUSE</name>
<reference key="1">
    <citation type="journal article" date="2005" name="Science">
        <title>The transcriptional landscape of the mammalian genome.</title>
        <authorList>
            <person name="Carninci P."/>
            <person name="Kasukawa T."/>
            <person name="Katayama S."/>
            <person name="Gough J."/>
            <person name="Frith M.C."/>
            <person name="Maeda N."/>
            <person name="Oyama R."/>
            <person name="Ravasi T."/>
            <person name="Lenhard B."/>
            <person name="Wells C."/>
            <person name="Kodzius R."/>
            <person name="Shimokawa K."/>
            <person name="Bajic V.B."/>
            <person name="Brenner S.E."/>
            <person name="Batalov S."/>
            <person name="Forrest A.R."/>
            <person name="Zavolan M."/>
            <person name="Davis M.J."/>
            <person name="Wilming L.G."/>
            <person name="Aidinis V."/>
            <person name="Allen J.E."/>
            <person name="Ambesi-Impiombato A."/>
            <person name="Apweiler R."/>
            <person name="Aturaliya R.N."/>
            <person name="Bailey T.L."/>
            <person name="Bansal M."/>
            <person name="Baxter L."/>
            <person name="Beisel K.W."/>
            <person name="Bersano T."/>
            <person name="Bono H."/>
            <person name="Chalk A.M."/>
            <person name="Chiu K.P."/>
            <person name="Choudhary V."/>
            <person name="Christoffels A."/>
            <person name="Clutterbuck D.R."/>
            <person name="Crowe M.L."/>
            <person name="Dalla E."/>
            <person name="Dalrymple B.P."/>
            <person name="de Bono B."/>
            <person name="Della Gatta G."/>
            <person name="di Bernardo D."/>
            <person name="Down T."/>
            <person name="Engstrom P."/>
            <person name="Fagiolini M."/>
            <person name="Faulkner G."/>
            <person name="Fletcher C.F."/>
            <person name="Fukushima T."/>
            <person name="Furuno M."/>
            <person name="Futaki S."/>
            <person name="Gariboldi M."/>
            <person name="Georgii-Hemming P."/>
            <person name="Gingeras T.R."/>
            <person name="Gojobori T."/>
            <person name="Green R.E."/>
            <person name="Gustincich S."/>
            <person name="Harbers M."/>
            <person name="Hayashi Y."/>
            <person name="Hensch T.K."/>
            <person name="Hirokawa N."/>
            <person name="Hill D."/>
            <person name="Huminiecki L."/>
            <person name="Iacono M."/>
            <person name="Ikeo K."/>
            <person name="Iwama A."/>
            <person name="Ishikawa T."/>
            <person name="Jakt M."/>
            <person name="Kanapin A."/>
            <person name="Katoh M."/>
            <person name="Kawasawa Y."/>
            <person name="Kelso J."/>
            <person name="Kitamura H."/>
            <person name="Kitano H."/>
            <person name="Kollias G."/>
            <person name="Krishnan S.P."/>
            <person name="Kruger A."/>
            <person name="Kummerfeld S.K."/>
            <person name="Kurochkin I.V."/>
            <person name="Lareau L.F."/>
            <person name="Lazarevic D."/>
            <person name="Lipovich L."/>
            <person name="Liu J."/>
            <person name="Liuni S."/>
            <person name="McWilliam S."/>
            <person name="Madan Babu M."/>
            <person name="Madera M."/>
            <person name="Marchionni L."/>
            <person name="Matsuda H."/>
            <person name="Matsuzawa S."/>
            <person name="Miki H."/>
            <person name="Mignone F."/>
            <person name="Miyake S."/>
            <person name="Morris K."/>
            <person name="Mottagui-Tabar S."/>
            <person name="Mulder N."/>
            <person name="Nakano N."/>
            <person name="Nakauchi H."/>
            <person name="Ng P."/>
            <person name="Nilsson R."/>
            <person name="Nishiguchi S."/>
            <person name="Nishikawa S."/>
            <person name="Nori F."/>
            <person name="Ohara O."/>
            <person name="Okazaki Y."/>
            <person name="Orlando V."/>
            <person name="Pang K.C."/>
            <person name="Pavan W.J."/>
            <person name="Pavesi G."/>
            <person name="Pesole G."/>
            <person name="Petrovsky N."/>
            <person name="Piazza S."/>
            <person name="Reed J."/>
            <person name="Reid J.F."/>
            <person name="Ring B.Z."/>
            <person name="Ringwald M."/>
            <person name="Rost B."/>
            <person name="Ruan Y."/>
            <person name="Salzberg S.L."/>
            <person name="Sandelin A."/>
            <person name="Schneider C."/>
            <person name="Schoenbach C."/>
            <person name="Sekiguchi K."/>
            <person name="Semple C.A."/>
            <person name="Seno S."/>
            <person name="Sessa L."/>
            <person name="Sheng Y."/>
            <person name="Shibata Y."/>
            <person name="Shimada H."/>
            <person name="Shimada K."/>
            <person name="Silva D."/>
            <person name="Sinclair B."/>
            <person name="Sperling S."/>
            <person name="Stupka E."/>
            <person name="Sugiura K."/>
            <person name="Sultana R."/>
            <person name="Takenaka Y."/>
            <person name="Taki K."/>
            <person name="Tammoja K."/>
            <person name="Tan S.L."/>
            <person name="Tang S."/>
            <person name="Taylor M.S."/>
            <person name="Tegner J."/>
            <person name="Teichmann S.A."/>
            <person name="Ueda H.R."/>
            <person name="van Nimwegen E."/>
            <person name="Verardo R."/>
            <person name="Wei C.L."/>
            <person name="Yagi K."/>
            <person name="Yamanishi H."/>
            <person name="Zabarovsky E."/>
            <person name="Zhu S."/>
            <person name="Zimmer A."/>
            <person name="Hide W."/>
            <person name="Bult C."/>
            <person name="Grimmond S.M."/>
            <person name="Teasdale R.D."/>
            <person name="Liu E.T."/>
            <person name="Brusic V."/>
            <person name="Quackenbush J."/>
            <person name="Wahlestedt C."/>
            <person name="Mattick J.S."/>
            <person name="Hume D.A."/>
            <person name="Kai C."/>
            <person name="Sasaki D."/>
            <person name="Tomaru Y."/>
            <person name="Fukuda S."/>
            <person name="Kanamori-Katayama M."/>
            <person name="Suzuki M."/>
            <person name="Aoki J."/>
            <person name="Arakawa T."/>
            <person name="Iida J."/>
            <person name="Imamura K."/>
            <person name="Itoh M."/>
            <person name="Kato T."/>
            <person name="Kawaji H."/>
            <person name="Kawagashira N."/>
            <person name="Kawashima T."/>
            <person name="Kojima M."/>
            <person name="Kondo S."/>
            <person name="Konno H."/>
            <person name="Nakano K."/>
            <person name="Ninomiya N."/>
            <person name="Nishio T."/>
            <person name="Okada M."/>
            <person name="Plessy C."/>
            <person name="Shibata K."/>
            <person name="Shiraki T."/>
            <person name="Suzuki S."/>
            <person name="Tagami M."/>
            <person name="Waki K."/>
            <person name="Watahiki A."/>
            <person name="Okamura-Oho Y."/>
            <person name="Suzuki H."/>
            <person name="Kawai J."/>
            <person name="Hayashizaki Y."/>
        </authorList>
    </citation>
    <scope>NUCLEOTIDE SEQUENCE [LARGE SCALE MRNA]</scope>
    <source>
        <strain>C57BL/6J</strain>
        <tissue>Olfactory bulb</tissue>
    </source>
</reference>
<reference key="2">
    <citation type="journal article" date="2004" name="Genome Res.">
        <title>The status, quality, and expansion of the NIH full-length cDNA project: the Mammalian Gene Collection (MGC).</title>
        <authorList>
            <consortium name="The MGC Project Team"/>
        </authorList>
    </citation>
    <scope>NUCLEOTIDE SEQUENCE [LARGE SCALE MRNA]</scope>
    <source>
        <strain>CD-1</strain>
        <tissue>Neural stem cell</tissue>
    </source>
</reference>
<reference key="3">
    <citation type="submission" date="2009-01" db="UniProtKB">
        <authorList>
            <person name="Lubec G."/>
            <person name="Sunyer B."/>
            <person name="Chen W.-Q."/>
        </authorList>
    </citation>
    <scope>PROTEIN SEQUENCE OF 345-353</scope>
    <scope>IDENTIFICATION BY MASS SPECTROMETRY</scope>
    <source>
        <strain>OF1</strain>
        <tissue>Hippocampus</tissue>
    </source>
</reference>
<reference key="4">
    <citation type="journal article" date="2010" name="Cell">
        <title>A tissue-specific atlas of mouse protein phosphorylation and expression.</title>
        <authorList>
            <person name="Huttlin E.L."/>
            <person name="Jedrychowski M.P."/>
            <person name="Elias J.E."/>
            <person name="Goswami T."/>
            <person name="Rad R."/>
            <person name="Beausoleil S.A."/>
            <person name="Villen J."/>
            <person name="Haas W."/>
            <person name="Sowa M.E."/>
            <person name="Gygi S.P."/>
        </authorList>
    </citation>
    <scope>IDENTIFICATION BY MASS SPECTROMETRY [LARGE SCALE ANALYSIS]</scope>
    <source>
        <tissue>Brown adipose tissue</tissue>
        <tissue>Liver</tissue>
        <tissue>Lung</tissue>
        <tissue>Pancreas</tissue>
        <tissue>Spleen</tissue>
        <tissue>Testis</tissue>
    </source>
</reference>
<sequence length="778" mass="87678">MEKFGMNFGGGPSKKDLLETIETQKKQLLQYQARLKDVVRAYKSLLKEKEALEASIKVLSVSHEADVGLSGVQPPGLTFPDSVDDRCSTHSEDSTGTATSLDTAASLTSVKGEFGVEDDRAARGPLPPKSEEASGSESGVSSSSGDGPSAGSEMDKRVHQLKTQLATLTSSLATVTQEKSRMEASYLADKKKMKQDLEDANKKAEEERGRLEGDLKVLQEQIAETKARLITQQHDRAQEQSDHALMLRELQKLLQEERTQRQDLELRLEETREALAGRAYAADQVEGFELQTKQLTREVEELKGELQTIRDEKNRPDPRLQELQQEAARLKSHFQAQLQQEMRKTALAEDQLRQQSQVEEQRVAALESQISEVSELLGTYEKAKQKDQLAIQKLKERLLQLDLENKTLALAASSRSSLDIHGDESSLDINVLKDKMEKLKKLLQVAARKSQVTLDVEKLCDPEIMANSEAADGEKATALYYQQELKQLKEEFERYKMRAQVVLKSKNTKDGSLGKELEAAQEQLAELKDKYISLRLSCEELESQHQQEAEDWKQELARLQQLHRQELERSQLDFRDRTLKLEEELHKQRDRALAVLAEKDLELEQLRSVALSSGLPGRRSPVGGVGGGGLGDPADTASSDSLTQALQLAAANEPTFFLYAEQLARKEVEITSLRKQKHRLEVEAHQLQERLLEEGERHREEVGALQSHIEKNMRDQSREGANLEYLKNIIYRFLTLPDSLGRQQTLTAILTILHFSPEEKQVLMRLPSGGSWWPSGKR</sequence>
<gene>
    <name type="primary">Gcc1</name>
</gene>
<protein>
    <recommendedName>
        <fullName>GRIP and coiled-coil domain-containing protein 1</fullName>
    </recommendedName>
    <alternativeName>
        <fullName>Golgi coiled-coil protein 1</fullName>
    </alternativeName>
</protein>
<dbReference type="EMBL" id="AK032253">
    <property type="protein sequence ID" value="BAC27780.1"/>
    <property type="molecule type" value="mRNA"/>
</dbReference>
<dbReference type="EMBL" id="BC066807">
    <property type="protein sequence ID" value="AAH66807.1"/>
    <property type="molecule type" value="mRNA"/>
</dbReference>
<dbReference type="CCDS" id="CCDS19951.1"/>
<dbReference type="RefSeq" id="NP_001414050.1">
    <property type="nucleotide sequence ID" value="NM_001427121.1"/>
</dbReference>
<dbReference type="RefSeq" id="NP_083176.3">
    <property type="nucleotide sequence ID" value="NM_028900.5"/>
</dbReference>
<dbReference type="SMR" id="Q9D4H2"/>
<dbReference type="BioGRID" id="216701">
    <property type="interactions" value="1"/>
</dbReference>
<dbReference type="FunCoup" id="Q9D4H2">
    <property type="interactions" value="1860"/>
</dbReference>
<dbReference type="STRING" id="10090.ENSMUSP00000087997"/>
<dbReference type="iPTMnet" id="Q9D4H2"/>
<dbReference type="PhosphoSitePlus" id="Q9D4H2"/>
<dbReference type="PaxDb" id="10090-ENSMUSP00000087997"/>
<dbReference type="PeptideAtlas" id="Q9D4H2"/>
<dbReference type="ProteomicsDB" id="267777"/>
<dbReference type="Pumba" id="Q9D4H2"/>
<dbReference type="Antibodypedia" id="17726">
    <property type="antibodies" value="158 antibodies from 22 providers"/>
</dbReference>
<dbReference type="Ensembl" id="ENSMUST00000064377.7">
    <property type="protein sequence ID" value="ENSMUSP00000067395.7"/>
    <property type="gene ID" value="ENSMUSG00000029708.10"/>
</dbReference>
<dbReference type="Ensembl" id="ENSMUST00000090511.4">
    <property type="protein sequence ID" value="ENSMUSP00000087997.4"/>
    <property type="gene ID" value="ENSMUSG00000029708.10"/>
</dbReference>
<dbReference type="GeneID" id="74375"/>
<dbReference type="KEGG" id="mmu:74375"/>
<dbReference type="UCSC" id="uc009bco.2">
    <property type="organism name" value="mouse"/>
</dbReference>
<dbReference type="AGR" id="MGI:1921625"/>
<dbReference type="CTD" id="79571"/>
<dbReference type="MGI" id="MGI:1921625">
    <property type="gene designation" value="Gcc1"/>
</dbReference>
<dbReference type="VEuPathDB" id="HostDB:ENSMUSG00000029708"/>
<dbReference type="eggNOG" id="ENOG502QQ2S">
    <property type="taxonomic scope" value="Eukaryota"/>
</dbReference>
<dbReference type="GeneTree" id="ENSGT00940000153772"/>
<dbReference type="HOGENOM" id="CLU_020679_0_0_1"/>
<dbReference type="InParanoid" id="Q9D4H2"/>
<dbReference type="OMA" id="AEMQAIN"/>
<dbReference type="OrthoDB" id="9898580at2759"/>
<dbReference type="PhylomeDB" id="Q9D4H2"/>
<dbReference type="TreeFam" id="TF324186"/>
<dbReference type="Reactome" id="R-MMU-6811440">
    <property type="pathway name" value="Retrograde transport at the Trans-Golgi-Network"/>
</dbReference>
<dbReference type="BioGRID-ORCS" id="74375">
    <property type="hits" value="2 hits in 78 CRISPR screens"/>
</dbReference>
<dbReference type="ChiTaRS" id="Gcc1">
    <property type="organism name" value="mouse"/>
</dbReference>
<dbReference type="PRO" id="PR:Q9D4H2"/>
<dbReference type="Proteomes" id="UP000000589">
    <property type="component" value="Chromosome 6"/>
</dbReference>
<dbReference type="RNAct" id="Q9D4H2">
    <property type="molecule type" value="protein"/>
</dbReference>
<dbReference type="Bgee" id="ENSMUSG00000029708">
    <property type="expression patterns" value="Expressed in granulocyte and 233 other cell types or tissues"/>
</dbReference>
<dbReference type="ExpressionAtlas" id="Q9D4H2">
    <property type="expression patterns" value="baseline and differential"/>
</dbReference>
<dbReference type="GO" id="GO:0000139">
    <property type="term" value="C:Golgi membrane"/>
    <property type="evidence" value="ECO:0007669"/>
    <property type="project" value="UniProtKB-SubCell"/>
</dbReference>
<dbReference type="FunFam" id="1.10.220.60:FF:000005">
    <property type="entry name" value="GRIP and coiled-coil domain-containing protein 1"/>
    <property type="match status" value="1"/>
</dbReference>
<dbReference type="Gene3D" id="1.10.220.60">
    <property type="entry name" value="GRIP domain"/>
    <property type="match status" value="1"/>
</dbReference>
<dbReference type="InterPro" id="IPR051952">
    <property type="entry name" value="Golgi-autophagy_related"/>
</dbReference>
<dbReference type="InterPro" id="IPR000237">
    <property type="entry name" value="GRIP_dom"/>
</dbReference>
<dbReference type="PANTHER" id="PTHR23157">
    <property type="entry name" value="GRIP AND COILED-COIL DOMAIN-CONTAINING PROTEIN 1"/>
    <property type="match status" value="1"/>
</dbReference>
<dbReference type="PANTHER" id="PTHR23157:SF25">
    <property type="entry name" value="GRIP AND COILED-COIL DOMAIN-CONTAINING PROTEIN 1"/>
    <property type="match status" value="1"/>
</dbReference>
<dbReference type="Pfam" id="PF01465">
    <property type="entry name" value="GRIP"/>
    <property type="match status" value="1"/>
</dbReference>
<dbReference type="SMART" id="SM00755">
    <property type="entry name" value="Grip"/>
    <property type="match status" value="1"/>
</dbReference>
<dbReference type="PROSITE" id="PS50913">
    <property type="entry name" value="GRIP"/>
    <property type="match status" value="1"/>
</dbReference>